<protein>
    <recommendedName>
        <fullName evidence="1">Large ribosomal subunit protein bL28</fullName>
    </recommendedName>
    <alternativeName>
        <fullName evidence="2">50S ribosomal protein L28</fullName>
    </alternativeName>
</protein>
<name>RL28_COLP3</name>
<organism>
    <name type="scientific">Colwellia psychrerythraea (strain 34H / ATCC BAA-681)</name>
    <name type="common">Vibrio psychroerythus</name>
    <dbReference type="NCBI Taxonomy" id="167879"/>
    <lineage>
        <taxon>Bacteria</taxon>
        <taxon>Pseudomonadati</taxon>
        <taxon>Pseudomonadota</taxon>
        <taxon>Gammaproteobacteria</taxon>
        <taxon>Alteromonadales</taxon>
        <taxon>Colwelliaceae</taxon>
        <taxon>Colwellia</taxon>
    </lineage>
</organism>
<comment type="similarity">
    <text evidence="1">Belongs to the bacterial ribosomal protein bL28 family.</text>
</comment>
<feature type="chain" id="PRO_1000007219" description="Large ribosomal subunit protein bL28">
    <location>
        <begin position="1"/>
        <end position="78"/>
    </location>
</feature>
<accession>Q48AD7</accession>
<gene>
    <name evidence="1" type="primary">rpmB</name>
    <name type="ordered locus">CPS_0209</name>
</gene>
<proteinExistence type="inferred from homology"/>
<reference key="1">
    <citation type="journal article" date="2005" name="Proc. Natl. Acad. Sci. U.S.A.">
        <title>The psychrophilic lifestyle as revealed by the genome sequence of Colwellia psychrerythraea 34H through genomic and proteomic analyses.</title>
        <authorList>
            <person name="Methe B.A."/>
            <person name="Nelson K.E."/>
            <person name="Deming J.W."/>
            <person name="Momen B."/>
            <person name="Melamud E."/>
            <person name="Zhang X."/>
            <person name="Moult J."/>
            <person name="Madupu R."/>
            <person name="Nelson W.C."/>
            <person name="Dodson R.J."/>
            <person name="Brinkac L.M."/>
            <person name="Daugherty S.C."/>
            <person name="Durkin A.S."/>
            <person name="DeBoy R.T."/>
            <person name="Kolonay J.F."/>
            <person name="Sullivan S.A."/>
            <person name="Zhou L."/>
            <person name="Davidsen T.M."/>
            <person name="Wu M."/>
            <person name="Huston A.L."/>
            <person name="Lewis M."/>
            <person name="Weaver B."/>
            <person name="Weidman J.F."/>
            <person name="Khouri H."/>
            <person name="Utterback T.R."/>
            <person name="Feldblyum T.V."/>
            <person name="Fraser C.M."/>
        </authorList>
    </citation>
    <scope>NUCLEOTIDE SEQUENCE [LARGE SCALE GENOMIC DNA]</scope>
    <source>
        <strain>34H / ATCC BAA-681</strain>
    </source>
</reference>
<evidence type="ECO:0000255" key="1">
    <source>
        <dbReference type="HAMAP-Rule" id="MF_00373"/>
    </source>
</evidence>
<evidence type="ECO:0000305" key="2"/>
<dbReference type="EMBL" id="CP000083">
    <property type="protein sequence ID" value="AAZ26146.1"/>
    <property type="molecule type" value="Genomic_DNA"/>
</dbReference>
<dbReference type="RefSeq" id="WP_011041083.1">
    <property type="nucleotide sequence ID" value="NC_003910.7"/>
</dbReference>
<dbReference type="SMR" id="Q48AD7"/>
<dbReference type="STRING" id="167879.CPS_0209"/>
<dbReference type="DNASU" id="3520396"/>
<dbReference type="KEGG" id="cps:CPS_0209"/>
<dbReference type="eggNOG" id="COG0227">
    <property type="taxonomic scope" value="Bacteria"/>
</dbReference>
<dbReference type="HOGENOM" id="CLU_064548_3_1_6"/>
<dbReference type="Proteomes" id="UP000000547">
    <property type="component" value="Chromosome"/>
</dbReference>
<dbReference type="GO" id="GO:0022625">
    <property type="term" value="C:cytosolic large ribosomal subunit"/>
    <property type="evidence" value="ECO:0007669"/>
    <property type="project" value="TreeGrafter"/>
</dbReference>
<dbReference type="GO" id="GO:0003735">
    <property type="term" value="F:structural constituent of ribosome"/>
    <property type="evidence" value="ECO:0007669"/>
    <property type="project" value="InterPro"/>
</dbReference>
<dbReference type="GO" id="GO:0006412">
    <property type="term" value="P:translation"/>
    <property type="evidence" value="ECO:0007669"/>
    <property type="project" value="UniProtKB-UniRule"/>
</dbReference>
<dbReference type="FunFam" id="2.30.170.40:FF:000001">
    <property type="entry name" value="50S ribosomal protein L28"/>
    <property type="match status" value="1"/>
</dbReference>
<dbReference type="Gene3D" id="2.30.170.40">
    <property type="entry name" value="Ribosomal protein L28/L24"/>
    <property type="match status" value="1"/>
</dbReference>
<dbReference type="HAMAP" id="MF_00373">
    <property type="entry name" value="Ribosomal_bL28"/>
    <property type="match status" value="1"/>
</dbReference>
<dbReference type="InterPro" id="IPR026569">
    <property type="entry name" value="Ribosomal_bL28"/>
</dbReference>
<dbReference type="InterPro" id="IPR034704">
    <property type="entry name" value="Ribosomal_bL28/bL31-like_sf"/>
</dbReference>
<dbReference type="InterPro" id="IPR001383">
    <property type="entry name" value="Ribosomal_bL28_bact-type"/>
</dbReference>
<dbReference type="InterPro" id="IPR037147">
    <property type="entry name" value="Ribosomal_bL28_sf"/>
</dbReference>
<dbReference type="NCBIfam" id="TIGR00009">
    <property type="entry name" value="L28"/>
    <property type="match status" value="1"/>
</dbReference>
<dbReference type="PANTHER" id="PTHR13528">
    <property type="entry name" value="39S RIBOSOMAL PROTEIN L28, MITOCHONDRIAL"/>
    <property type="match status" value="1"/>
</dbReference>
<dbReference type="PANTHER" id="PTHR13528:SF2">
    <property type="entry name" value="LARGE RIBOSOMAL SUBUNIT PROTEIN BL28M"/>
    <property type="match status" value="1"/>
</dbReference>
<dbReference type="Pfam" id="PF00830">
    <property type="entry name" value="Ribosomal_L28"/>
    <property type="match status" value="1"/>
</dbReference>
<dbReference type="SUPFAM" id="SSF143800">
    <property type="entry name" value="L28p-like"/>
    <property type="match status" value="1"/>
</dbReference>
<keyword id="KW-0687">Ribonucleoprotein</keyword>
<keyword id="KW-0689">Ribosomal protein</keyword>
<sequence length="78" mass="9059">MSKICQVTGKVPMVGNNRSHARNATRRRFLPNLQSHRFWVESENRFVKLRLTPKGMRIIDKKGIDVVLTDIRARGEKV</sequence>